<sequence length="406" mass="44874">MSSEAKTLQAIKFDRETKTLDILDQLLIPYATEYISIKSIEDAYQAIKLMQVRGAPAIAIVGAFSIVVDVYNNLKETKEKSRTIGDLVESIHYLITARPTAVNLSNACLDIEKLILTEFKKDELVNQHTFDIVYQYSVALYDDDLDNNFKIGDNGLHYIVETLKSQSFTGPFSIITICNTGSLATSGHGTALGIIRTVFKKLSKDAGEKFWLEHVYPCETRPYNQGARLTTYELNYEGIPSTLVCDSMASSLIATLSKQRKVKSSTAPVKFIIAGADRIVENGDTANKIGTFQLSTIADYFNSRAEKENTIKFIIAAPRTTIDFKTKTGDGIIIEERPSQELTTLNGPVLTNNGVLEKQTVGIATPGIDVWNPAFDVTPHELIDCIVTEDTNAFVKNSEGDFNLKV</sequence>
<feature type="chain" id="PRO_0000402027" description="Methylthioribose-1-phosphate isomerase">
    <location>
        <begin position="1"/>
        <end position="406"/>
    </location>
</feature>
<feature type="active site" description="Proton donor" evidence="1">
    <location>
        <position position="277"/>
    </location>
</feature>
<feature type="site" description="Transition state stabilizer" evidence="1">
    <location>
        <position position="178"/>
    </location>
</feature>
<accession>Q6BZH5</accession>
<proteinExistence type="inferred from homology"/>
<evidence type="ECO:0000255" key="1">
    <source>
        <dbReference type="HAMAP-Rule" id="MF_03119"/>
    </source>
</evidence>
<gene>
    <name evidence="1" type="primary">MRI1</name>
    <name type="ordered locus">DEHA2A01276g</name>
</gene>
<name>MTNA_DEBHA</name>
<dbReference type="EC" id="5.3.1.23" evidence="1"/>
<dbReference type="EMBL" id="CR382133">
    <property type="protein sequence ID" value="CAG84341.2"/>
    <property type="molecule type" value="Genomic_DNA"/>
</dbReference>
<dbReference type="RefSeq" id="XP_456394.2">
    <property type="nucleotide sequence ID" value="XM_456394.1"/>
</dbReference>
<dbReference type="SMR" id="Q6BZH5"/>
<dbReference type="FunCoup" id="Q6BZH5">
    <property type="interactions" value="755"/>
</dbReference>
<dbReference type="STRING" id="284592.Q6BZH5"/>
<dbReference type="GeneID" id="2899313"/>
<dbReference type="KEGG" id="dha:DEHA2A01276g"/>
<dbReference type="VEuPathDB" id="FungiDB:DEHA2A01276g"/>
<dbReference type="eggNOG" id="KOG1468">
    <property type="taxonomic scope" value="Eukaryota"/>
</dbReference>
<dbReference type="HOGENOM" id="CLU_016218_1_3_1"/>
<dbReference type="InParanoid" id="Q6BZH5"/>
<dbReference type="OMA" id="CETRPLN"/>
<dbReference type="OrthoDB" id="2461at2759"/>
<dbReference type="UniPathway" id="UPA00904">
    <property type="reaction ID" value="UER00874"/>
</dbReference>
<dbReference type="Proteomes" id="UP000000599">
    <property type="component" value="Chromosome A"/>
</dbReference>
<dbReference type="GO" id="GO:0005737">
    <property type="term" value="C:cytoplasm"/>
    <property type="evidence" value="ECO:0007669"/>
    <property type="project" value="UniProtKB-SubCell"/>
</dbReference>
<dbReference type="GO" id="GO:0005634">
    <property type="term" value="C:nucleus"/>
    <property type="evidence" value="ECO:0007669"/>
    <property type="project" value="UniProtKB-SubCell"/>
</dbReference>
<dbReference type="GO" id="GO:0046523">
    <property type="term" value="F:S-methyl-5-thioribose-1-phosphate isomerase activity"/>
    <property type="evidence" value="ECO:0007669"/>
    <property type="project" value="UniProtKB-UniRule"/>
</dbReference>
<dbReference type="GO" id="GO:0019509">
    <property type="term" value="P:L-methionine salvage from methylthioadenosine"/>
    <property type="evidence" value="ECO:0007669"/>
    <property type="project" value="UniProtKB-UniRule"/>
</dbReference>
<dbReference type="FunFam" id="1.20.120.420:FF:000003">
    <property type="entry name" value="Methylthioribose-1-phosphate isomerase"/>
    <property type="match status" value="1"/>
</dbReference>
<dbReference type="Gene3D" id="1.20.120.420">
    <property type="entry name" value="translation initiation factor eif-2b, domain 1"/>
    <property type="match status" value="1"/>
</dbReference>
<dbReference type="Gene3D" id="3.40.50.10470">
    <property type="entry name" value="Translation initiation factor eif-2b, domain 2"/>
    <property type="match status" value="1"/>
</dbReference>
<dbReference type="HAMAP" id="MF_01678">
    <property type="entry name" value="Salvage_MtnA"/>
    <property type="match status" value="1"/>
</dbReference>
<dbReference type="InterPro" id="IPR000649">
    <property type="entry name" value="IF-2B-related"/>
</dbReference>
<dbReference type="InterPro" id="IPR005251">
    <property type="entry name" value="IF-M1Pi"/>
</dbReference>
<dbReference type="InterPro" id="IPR042529">
    <property type="entry name" value="IF_2B-like_C"/>
</dbReference>
<dbReference type="InterPro" id="IPR011559">
    <property type="entry name" value="Initiation_fac_2B_a/b/d"/>
</dbReference>
<dbReference type="InterPro" id="IPR027363">
    <property type="entry name" value="M1Pi_N"/>
</dbReference>
<dbReference type="InterPro" id="IPR037171">
    <property type="entry name" value="NagB/RpiA_transferase-like"/>
</dbReference>
<dbReference type="NCBIfam" id="TIGR00524">
    <property type="entry name" value="eIF-2B_rel"/>
    <property type="match status" value="1"/>
</dbReference>
<dbReference type="NCBIfam" id="NF004326">
    <property type="entry name" value="PRK05720.1"/>
    <property type="match status" value="1"/>
</dbReference>
<dbReference type="NCBIfam" id="TIGR00512">
    <property type="entry name" value="salvage_mtnA"/>
    <property type="match status" value="1"/>
</dbReference>
<dbReference type="PANTHER" id="PTHR43475">
    <property type="entry name" value="METHYLTHIORIBOSE-1-PHOSPHATE ISOMERASE"/>
    <property type="match status" value="1"/>
</dbReference>
<dbReference type="PANTHER" id="PTHR43475:SF1">
    <property type="entry name" value="METHYLTHIORIBOSE-1-PHOSPHATE ISOMERASE"/>
    <property type="match status" value="1"/>
</dbReference>
<dbReference type="Pfam" id="PF01008">
    <property type="entry name" value="IF-2B"/>
    <property type="match status" value="1"/>
</dbReference>
<dbReference type="SUPFAM" id="SSF100950">
    <property type="entry name" value="NagB/RpiA/CoA transferase-like"/>
    <property type="match status" value="1"/>
</dbReference>
<reference key="1">
    <citation type="journal article" date="2004" name="Nature">
        <title>Genome evolution in yeasts.</title>
        <authorList>
            <person name="Dujon B."/>
            <person name="Sherman D."/>
            <person name="Fischer G."/>
            <person name="Durrens P."/>
            <person name="Casaregola S."/>
            <person name="Lafontaine I."/>
            <person name="de Montigny J."/>
            <person name="Marck C."/>
            <person name="Neuveglise C."/>
            <person name="Talla E."/>
            <person name="Goffard N."/>
            <person name="Frangeul L."/>
            <person name="Aigle M."/>
            <person name="Anthouard V."/>
            <person name="Babour A."/>
            <person name="Barbe V."/>
            <person name="Barnay S."/>
            <person name="Blanchin S."/>
            <person name="Beckerich J.-M."/>
            <person name="Beyne E."/>
            <person name="Bleykasten C."/>
            <person name="Boisrame A."/>
            <person name="Boyer J."/>
            <person name="Cattolico L."/>
            <person name="Confanioleri F."/>
            <person name="de Daruvar A."/>
            <person name="Despons L."/>
            <person name="Fabre E."/>
            <person name="Fairhead C."/>
            <person name="Ferry-Dumazet H."/>
            <person name="Groppi A."/>
            <person name="Hantraye F."/>
            <person name="Hennequin C."/>
            <person name="Jauniaux N."/>
            <person name="Joyet P."/>
            <person name="Kachouri R."/>
            <person name="Kerrest A."/>
            <person name="Koszul R."/>
            <person name="Lemaire M."/>
            <person name="Lesur I."/>
            <person name="Ma L."/>
            <person name="Muller H."/>
            <person name="Nicaud J.-M."/>
            <person name="Nikolski M."/>
            <person name="Oztas S."/>
            <person name="Ozier-Kalogeropoulos O."/>
            <person name="Pellenz S."/>
            <person name="Potier S."/>
            <person name="Richard G.-F."/>
            <person name="Straub M.-L."/>
            <person name="Suleau A."/>
            <person name="Swennen D."/>
            <person name="Tekaia F."/>
            <person name="Wesolowski-Louvel M."/>
            <person name="Westhof E."/>
            <person name="Wirth B."/>
            <person name="Zeniou-Meyer M."/>
            <person name="Zivanovic Y."/>
            <person name="Bolotin-Fukuhara M."/>
            <person name="Thierry A."/>
            <person name="Bouchier C."/>
            <person name="Caudron B."/>
            <person name="Scarpelli C."/>
            <person name="Gaillardin C."/>
            <person name="Weissenbach J."/>
            <person name="Wincker P."/>
            <person name="Souciet J.-L."/>
        </authorList>
    </citation>
    <scope>NUCLEOTIDE SEQUENCE [LARGE SCALE GENOMIC DNA]</scope>
    <source>
        <strain>ATCC 36239 / CBS 767 / BCRC 21394 / JCM 1990 / NBRC 0083 / IGC 2968</strain>
    </source>
</reference>
<comment type="function">
    <text evidence="1">Catalyzes the interconversion of methylthioribose-1-phosphate (MTR-1-P) into methylthioribulose-1-phosphate (MTRu-1-P).</text>
</comment>
<comment type="catalytic activity">
    <reaction evidence="1">
        <text>5-(methylsulfanyl)-alpha-D-ribose 1-phosphate = 5-(methylsulfanyl)-D-ribulose 1-phosphate</text>
        <dbReference type="Rhea" id="RHEA:19989"/>
        <dbReference type="ChEBI" id="CHEBI:58533"/>
        <dbReference type="ChEBI" id="CHEBI:58548"/>
        <dbReference type="EC" id="5.3.1.23"/>
    </reaction>
</comment>
<comment type="pathway">
    <text evidence="1">Amino-acid biosynthesis; L-methionine biosynthesis via salvage pathway; L-methionine from S-methyl-5-thio-alpha-D-ribose 1-phosphate: step 1/6.</text>
</comment>
<comment type="subcellular location">
    <subcellularLocation>
        <location evidence="1">Cytoplasm</location>
    </subcellularLocation>
    <subcellularLocation>
        <location evidence="1">Nucleus</location>
    </subcellularLocation>
</comment>
<comment type="similarity">
    <text evidence="1">Belongs to the eIF-2B alpha/beta/delta subunits family. MtnA subfamily.</text>
</comment>
<organism>
    <name type="scientific">Debaryomyces hansenii (strain ATCC 36239 / CBS 767 / BCRC 21394 / JCM 1990 / NBRC 0083 / IGC 2968)</name>
    <name type="common">Yeast</name>
    <name type="synonym">Torulaspora hansenii</name>
    <dbReference type="NCBI Taxonomy" id="284592"/>
    <lineage>
        <taxon>Eukaryota</taxon>
        <taxon>Fungi</taxon>
        <taxon>Dikarya</taxon>
        <taxon>Ascomycota</taxon>
        <taxon>Saccharomycotina</taxon>
        <taxon>Pichiomycetes</taxon>
        <taxon>Debaryomycetaceae</taxon>
        <taxon>Debaryomyces</taxon>
    </lineage>
</organism>
<protein>
    <recommendedName>
        <fullName evidence="1">Methylthioribose-1-phosphate isomerase</fullName>
        <shortName evidence="1">M1Pi</shortName>
        <shortName evidence="1">MTR-1-P isomerase</shortName>
        <ecNumber evidence="1">5.3.1.23</ecNumber>
    </recommendedName>
    <alternativeName>
        <fullName evidence="1">S-methyl-5-thioribose-1-phosphate isomerase</fullName>
    </alternativeName>
    <alternativeName>
        <fullName evidence="1">Translation initiation factor eIF-2B subunit alpha/beta/delta-like protein</fullName>
    </alternativeName>
</protein>
<keyword id="KW-0028">Amino-acid biosynthesis</keyword>
<keyword id="KW-0963">Cytoplasm</keyword>
<keyword id="KW-0413">Isomerase</keyword>
<keyword id="KW-0486">Methionine biosynthesis</keyword>
<keyword id="KW-0539">Nucleus</keyword>
<keyword id="KW-1185">Reference proteome</keyword>